<organism>
    <name type="scientific">Rattus norvegicus</name>
    <name type="common">Rat</name>
    <dbReference type="NCBI Taxonomy" id="10116"/>
    <lineage>
        <taxon>Eukaryota</taxon>
        <taxon>Metazoa</taxon>
        <taxon>Chordata</taxon>
        <taxon>Craniata</taxon>
        <taxon>Vertebrata</taxon>
        <taxon>Euteleostomi</taxon>
        <taxon>Mammalia</taxon>
        <taxon>Eutheria</taxon>
        <taxon>Euarchontoglires</taxon>
        <taxon>Glires</taxon>
        <taxon>Rodentia</taxon>
        <taxon>Myomorpha</taxon>
        <taxon>Muroidea</taxon>
        <taxon>Muridae</taxon>
        <taxon>Murinae</taxon>
        <taxon>Rattus</taxon>
    </lineage>
</organism>
<keyword id="KW-0007">Acetylation</keyword>
<keyword id="KW-0025">Alternative splicing</keyword>
<keyword id="KW-0903">Direct protein sequencing</keyword>
<keyword id="KW-1017">Isopeptide bond</keyword>
<keyword id="KW-0488">Methylation</keyword>
<keyword id="KW-0507">mRNA processing</keyword>
<keyword id="KW-0508">mRNA splicing</keyword>
<keyword id="KW-0539">Nucleus</keyword>
<keyword id="KW-0597">Phosphoprotein</keyword>
<keyword id="KW-1185">Reference proteome</keyword>
<keyword id="KW-0677">Repeat</keyword>
<keyword id="KW-0687">Ribonucleoprotein</keyword>
<keyword id="KW-0694">RNA-binding</keyword>
<keyword id="KW-0747">Spliceosome</keyword>
<keyword id="KW-0832">Ubl conjugation</keyword>
<accession>Q62826</accession>
<accession>Q5M815</accession>
<feature type="initiator methionine" description="Removed" evidence="2">
    <location>
        <position position="1"/>
    </location>
</feature>
<feature type="chain" id="PRO_0000081866" description="Heterogeneous nuclear ribonucleoprotein M">
    <location>
        <begin position="2"/>
        <end position="690"/>
    </location>
</feature>
<feature type="domain" description="RRM 1" evidence="4">
    <location>
        <begin position="70"/>
        <end position="148"/>
    </location>
</feature>
<feature type="domain" description="RRM 2" evidence="4">
    <location>
        <begin position="164"/>
        <end position="241"/>
    </location>
</feature>
<feature type="repeat" description="1">
    <location>
        <begin position="360"/>
        <end position="365"/>
    </location>
</feature>
<feature type="repeat" description="2">
    <location>
        <begin position="367"/>
        <end position="372"/>
    </location>
</feature>
<feature type="repeat" description="3">
    <location>
        <begin position="375"/>
        <end position="380"/>
    </location>
</feature>
<feature type="repeat" description="4">
    <location>
        <begin position="386"/>
        <end position="391"/>
    </location>
</feature>
<feature type="repeat" description="5">
    <location>
        <begin position="393"/>
        <end position="398"/>
    </location>
</feature>
<feature type="repeat" description="6">
    <location>
        <begin position="400"/>
        <end position="405"/>
    </location>
</feature>
<feature type="repeat" description="7">
    <location>
        <begin position="406"/>
        <end position="411"/>
    </location>
</feature>
<feature type="repeat" description="8">
    <location>
        <begin position="413"/>
        <end position="418"/>
    </location>
</feature>
<feature type="repeat" description="9">
    <location>
        <begin position="421"/>
        <end position="426"/>
    </location>
</feature>
<feature type="repeat" description="10">
    <location>
        <begin position="428"/>
        <end position="433"/>
    </location>
</feature>
<feature type="repeat" description="11">
    <location>
        <begin position="435"/>
        <end position="440"/>
    </location>
</feature>
<feature type="repeat" description="12">
    <location>
        <begin position="442"/>
        <end position="447"/>
    </location>
</feature>
<feature type="repeat" description="13">
    <location>
        <begin position="453"/>
        <end position="458"/>
    </location>
</feature>
<feature type="repeat" description="14">
    <location>
        <begin position="460"/>
        <end position="465"/>
    </location>
</feature>
<feature type="repeat" description="15">
    <location>
        <begin position="467"/>
        <end position="472"/>
    </location>
</feature>
<feature type="repeat" description="16">
    <location>
        <begin position="474"/>
        <end position="479"/>
    </location>
</feature>
<feature type="repeat" description="17">
    <location>
        <begin position="481"/>
        <end position="486"/>
    </location>
</feature>
<feature type="repeat" description="18">
    <location>
        <begin position="488"/>
        <end position="493"/>
    </location>
</feature>
<feature type="repeat" description="19">
    <location>
        <begin position="500"/>
        <end position="505"/>
    </location>
</feature>
<feature type="repeat" description="20">
    <location>
        <begin position="507"/>
        <end position="512"/>
    </location>
</feature>
<feature type="repeat" description="21">
    <location>
        <begin position="514"/>
        <end position="519"/>
    </location>
</feature>
<feature type="repeat" description="22">
    <location>
        <begin position="522"/>
        <end position="527"/>
    </location>
</feature>
<feature type="repeat" description="23">
    <location>
        <begin position="528"/>
        <end position="532"/>
    </location>
</feature>
<feature type="repeat" description="24">
    <location>
        <begin position="535"/>
        <end position="540"/>
    </location>
</feature>
<feature type="repeat" description="25">
    <location>
        <begin position="541"/>
        <end position="545"/>
    </location>
</feature>
<feature type="repeat" description="26">
    <location>
        <begin position="548"/>
        <end position="553"/>
    </location>
</feature>
<feature type="repeat" description="27">
    <location>
        <begin position="563"/>
        <end position="568"/>
    </location>
</feature>
<feature type="domain" description="RRM 3" evidence="4">
    <location>
        <begin position="613"/>
        <end position="689"/>
    </location>
</feature>
<feature type="region of interest" description="Disordered" evidence="5">
    <location>
        <begin position="1"/>
        <end position="63"/>
    </location>
</feature>
<feature type="region of interest" description="27 X 6 AA repeats of [GEVSTPAN]-[ILMV]-[DE]-[RH]-[MLVI]-[GAV]">
    <location>
        <begin position="360"/>
        <end position="568"/>
    </location>
</feature>
<feature type="compositionally biased region" description="Low complexity" evidence="5">
    <location>
        <begin position="1"/>
        <end position="13"/>
    </location>
</feature>
<feature type="compositionally biased region" description="Basic and acidic residues" evidence="5">
    <location>
        <begin position="37"/>
        <end position="49"/>
    </location>
</feature>
<feature type="modified residue" description="N-acetylalanine" evidence="2">
    <location>
        <position position="2"/>
    </location>
</feature>
<feature type="modified residue" description="Phosphoserine" evidence="2">
    <location>
        <position position="29"/>
    </location>
</feature>
<feature type="modified residue" description="Phosphoserine" evidence="2">
    <location>
        <position position="85"/>
    </location>
</feature>
<feature type="modified residue" description="N6-acetyllysine; alternate" evidence="3">
    <location>
        <position position="133"/>
    </location>
</feature>
<feature type="modified residue" description="Phosphoserine" evidence="2">
    <location>
        <position position="164"/>
    </location>
</feature>
<feature type="modified residue" description="N6-acetyllysine; alternate" evidence="2">
    <location>
        <position position="237"/>
    </location>
</feature>
<feature type="modified residue" description="Phosphoserine" evidence="2">
    <location>
        <position position="325"/>
    </location>
</feature>
<feature type="modified residue" description="Phosphoserine" evidence="2">
    <location>
        <position position="337"/>
    </location>
</feature>
<feature type="modified residue" description="Phosphoserine" evidence="2">
    <location>
        <position position="357"/>
    </location>
</feature>
<feature type="modified residue" description="Phosphoserine" evidence="2">
    <location>
        <position position="392"/>
    </location>
</feature>
<feature type="modified residue" description="Phosphoserine" evidence="2">
    <location>
        <position position="412"/>
    </location>
</feature>
<feature type="modified residue" description="Phosphoserine" evidence="2">
    <location>
        <position position="428"/>
    </location>
</feature>
<feature type="modified residue" description="Phosphoserine" evidence="2">
    <location>
        <position position="441"/>
    </location>
</feature>
<feature type="modified residue" description="Omega-N-methylarginine" evidence="2">
    <location>
        <position position="456"/>
    </location>
</feature>
<feature type="modified residue" description="Phosphoserine" evidence="2">
    <location>
        <position position="488"/>
    </location>
</feature>
<feature type="modified residue" description="Phosphoserine" evidence="12">
    <location>
        <position position="535"/>
    </location>
</feature>
<feature type="modified residue" description="Phosphoserine" evidence="12">
    <location>
        <position position="548"/>
    </location>
</feature>
<feature type="modified residue" description="Phosphoserine" evidence="2">
    <location>
        <position position="578"/>
    </location>
</feature>
<feature type="modified residue" description="Phosphoserine" evidence="2">
    <location>
        <position position="593"/>
    </location>
</feature>
<feature type="modified residue" description="Phosphoserine" evidence="2">
    <location>
        <position position="597"/>
    </location>
</feature>
<feature type="modified residue" description="Phosphothreonine" evidence="2">
    <location>
        <position position="625"/>
    </location>
</feature>
<feature type="modified residue" description="N6-acetyllysine" evidence="3">
    <location>
        <position position="632"/>
    </location>
</feature>
<feature type="modified residue" description="N6-acetyllysine; alternate" evidence="2">
    <location>
        <position position="658"/>
    </location>
</feature>
<feature type="modified residue" description="Phosphoserine" evidence="12">
    <location>
        <position position="661"/>
    </location>
</feature>
<feature type="cross-link" description="Glycyl lysine isopeptide (Lys-Gly) (interchain with G-Cter in SUMO2)" evidence="2">
    <location>
        <position position="17"/>
    </location>
</feature>
<feature type="cross-link" description="Glycyl lysine isopeptide (Lys-Gly) (interchain with G-Cter in SUMO2)" evidence="2">
    <location>
        <position position="37"/>
    </location>
</feature>
<feature type="cross-link" description="Glycyl lysine isopeptide (Lys-Gly) (interchain with G-Cter in SUMO2)" evidence="2">
    <location>
        <position position="68"/>
    </location>
</feature>
<feature type="cross-link" description="Glycyl lysine isopeptide (Lys-Gly) (interchain with G-Cter in SUMO2)" evidence="2">
    <location>
        <position position="82"/>
    </location>
</feature>
<feature type="cross-link" description="Glycyl lysine isopeptide (Lys-Gly) (interchain with G-Cter in SUMO2)" evidence="2">
    <location>
        <position position="87"/>
    </location>
</feature>
<feature type="cross-link" description="Glycyl lysine isopeptide (Lys-Gly) (interchain with G-Cter in SUMO2)" evidence="2">
    <location>
        <position position="126"/>
    </location>
</feature>
<feature type="cross-link" description="Glycyl lysine isopeptide (Lys-Gly) (interchain with G-Cter in SUMO2); alternate" evidence="2">
    <location>
        <position position="133"/>
    </location>
</feature>
<feature type="cross-link" description="Glycyl lysine isopeptide (Lys-Gly) (interchain with G-Cter in SUMO2)" evidence="2">
    <location>
        <position position="142"/>
    </location>
</feature>
<feature type="cross-link" description="Glycyl lysine isopeptide (Lys-Gly) (interchain with G-Cter in SUMO2)" evidence="2">
    <location>
        <position position="144"/>
    </location>
</feature>
<feature type="cross-link" description="Glycyl lysine isopeptide (Lys-Gly) (interchain with G-Cter in SUMO2)" evidence="2">
    <location>
        <position position="181"/>
    </location>
</feature>
<feature type="cross-link" description="Glycyl lysine isopeptide (Lys-Gly) (interchain with G-Cter in SUMO2); alternate" evidence="2">
    <location>
        <position position="237"/>
    </location>
</feature>
<feature type="cross-link" description="Glycyl lysine isopeptide (Lys-Gly) (interchain with G-Cter in SUMO2)" evidence="2">
    <location>
        <position position="245"/>
    </location>
</feature>
<feature type="cross-link" description="Glycyl lysine isopeptide (Lys-Gly) (interchain with G-Cter in SUMO2)" evidence="2">
    <location>
        <position position="305"/>
    </location>
</feature>
<feature type="cross-link" description="Glycyl lysine isopeptide (Lys-Gly) (interchain with G-Cter in SUMO2)" evidence="2">
    <location>
        <position position="341"/>
    </location>
</feature>
<feature type="cross-link" description="Glycyl lysine isopeptide (Lys-Gly) (interchain with G-Cter in SUMO2)" evidence="2">
    <location>
        <position position="348"/>
    </location>
</feature>
<feature type="cross-link" description="Glycyl lysine isopeptide (Lys-Gly) (interchain with G-Cter in SUMO2)" evidence="2">
    <location>
        <position position="611"/>
    </location>
</feature>
<feature type="cross-link" description="Glycyl lysine isopeptide (Lys-Gly) (interchain with G-Cter in SUMO2)" evidence="2">
    <location>
        <position position="627"/>
    </location>
</feature>
<feature type="cross-link" description="Glycyl lysine isopeptide (Lys-Gly) (interchain with G-Cter in SUMO2)" evidence="2">
    <location>
        <position position="645"/>
    </location>
</feature>
<feature type="cross-link" description="Glycyl lysine isopeptide (Lys-Gly) (interchain with G-Cter in SUMO2)" evidence="2">
    <location>
        <position position="652"/>
    </location>
</feature>
<feature type="cross-link" description="Glycyl lysine isopeptide (Lys-Gly) (interchain with G-Cter in SUMO1); alternate" evidence="2">
    <location>
        <position position="658"/>
    </location>
</feature>
<feature type="cross-link" description="Glycyl lysine isopeptide (Lys-Gly) (interchain with G-Cter in SUMO2); alternate" evidence="2">
    <location>
        <position position="658"/>
    </location>
</feature>
<feature type="cross-link" description="Glycyl lysine isopeptide (Lys-Gly) (interchain with G-Cter in SUMO2)" evidence="2">
    <location>
        <position position="676"/>
    </location>
</feature>
<feature type="splice variant" id="VSP_051766" description="In isoform 2." evidence="9">
    <location>
        <begin position="1"/>
        <end position="155"/>
    </location>
</feature>
<feature type="sequence conflict" description="In Ref. 3; AA sequence." evidence="10" ref="3">
    <original>R</original>
    <variation>S</variation>
    <location>
        <position position="55"/>
    </location>
</feature>
<feature type="sequence conflict" description="In Ref. 2; AAH88317." evidence="10" ref="2">
    <original>S</original>
    <variation>G</variation>
    <location>
        <position position="352"/>
    </location>
</feature>
<feature type="sequence conflict" description="In Ref. 2; AAH88317." evidence="10" ref="2">
    <original>T</original>
    <variation>A</variation>
    <location>
        <position position="582"/>
    </location>
</feature>
<feature type="sequence conflict" description="In Ref. 3; AA sequence." evidence="10" ref="3">
    <original>I</original>
    <variation>T</variation>
    <location>
        <position position="615"/>
    </location>
</feature>
<dbReference type="EMBL" id="U32577">
    <property type="protein sequence ID" value="AAA83442.2"/>
    <property type="status" value="ALT_INIT"/>
    <property type="molecule type" value="mRNA"/>
</dbReference>
<dbReference type="EMBL" id="BC088317">
    <property type="protein sequence ID" value="AAH88317.1"/>
    <property type="molecule type" value="mRNA"/>
</dbReference>
<dbReference type="RefSeq" id="NP_001103381.1">
    <property type="nucleotide sequence ID" value="NM_001109911.1"/>
</dbReference>
<dbReference type="RefSeq" id="NP_446328.2">
    <property type="nucleotide sequence ID" value="NM_053876.2"/>
</dbReference>
<dbReference type="SMR" id="Q62826"/>
<dbReference type="BioGRID" id="250540">
    <property type="interactions" value="6"/>
</dbReference>
<dbReference type="FunCoup" id="Q62826">
    <property type="interactions" value="3881"/>
</dbReference>
<dbReference type="IntAct" id="Q62826">
    <property type="interactions" value="3"/>
</dbReference>
<dbReference type="MINT" id="Q62826"/>
<dbReference type="STRING" id="10116.ENSRNOP00000032108"/>
<dbReference type="CarbonylDB" id="Q62826"/>
<dbReference type="iPTMnet" id="Q62826"/>
<dbReference type="PhosphoSitePlus" id="Q62826"/>
<dbReference type="jPOST" id="Q62826"/>
<dbReference type="PaxDb" id="10116-ENSRNOP00000032108"/>
<dbReference type="PeptideAtlas" id="Q62826"/>
<dbReference type="GeneID" id="116655"/>
<dbReference type="KEGG" id="rno:116655"/>
<dbReference type="UCSC" id="RGD:620369">
    <molecule id="Q62826-1"/>
    <property type="organism name" value="rat"/>
</dbReference>
<dbReference type="AGR" id="RGD:620369"/>
<dbReference type="CTD" id="4670"/>
<dbReference type="RGD" id="620369">
    <property type="gene designation" value="Hnrnpm"/>
</dbReference>
<dbReference type="eggNOG" id="KOG4212">
    <property type="taxonomic scope" value="Eukaryota"/>
</dbReference>
<dbReference type="InParanoid" id="Q62826"/>
<dbReference type="OrthoDB" id="68399at9989"/>
<dbReference type="PhylomeDB" id="Q62826"/>
<dbReference type="PRO" id="PR:Q62826"/>
<dbReference type="Proteomes" id="UP000002494">
    <property type="component" value="Unplaced"/>
</dbReference>
<dbReference type="GO" id="GO:0071013">
    <property type="term" value="C:catalytic step 2 spliceosome"/>
    <property type="evidence" value="ECO:0000266"/>
    <property type="project" value="RGD"/>
</dbReference>
<dbReference type="GO" id="GO:0009986">
    <property type="term" value="C:cell surface"/>
    <property type="evidence" value="ECO:0000314"/>
    <property type="project" value="RGD"/>
</dbReference>
<dbReference type="GO" id="GO:0005737">
    <property type="term" value="C:cytoplasm"/>
    <property type="evidence" value="ECO:0000318"/>
    <property type="project" value="GO_Central"/>
</dbReference>
<dbReference type="GO" id="GO:0098978">
    <property type="term" value="C:glutamatergic synapse"/>
    <property type="evidence" value="ECO:0000314"/>
    <property type="project" value="SynGO"/>
</dbReference>
<dbReference type="GO" id="GO:0016363">
    <property type="term" value="C:nuclear matrix"/>
    <property type="evidence" value="ECO:0000266"/>
    <property type="project" value="RGD"/>
</dbReference>
<dbReference type="GO" id="GO:0005654">
    <property type="term" value="C:nucleoplasm"/>
    <property type="evidence" value="ECO:0000266"/>
    <property type="project" value="RGD"/>
</dbReference>
<dbReference type="GO" id="GO:0005634">
    <property type="term" value="C:nucleus"/>
    <property type="evidence" value="ECO:0000318"/>
    <property type="project" value="GO_Central"/>
</dbReference>
<dbReference type="GO" id="GO:0042382">
    <property type="term" value="C:paraspeckles"/>
    <property type="evidence" value="ECO:0000266"/>
    <property type="project" value="RGD"/>
</dbReference>
<dbReference type="GO" id="GO:0014069">
    <property type="term" value="C:postsynaptic density"/>
    <property type="evidence" value="ECO:0000314"/>
    <property type="project" value="SynGO"/>
</dbReference>
<dbReference type="GO" id="GO:1990904">
    <property type="term" value="C:ribonucleoprotein complex"/>
    <property type="evidence" value="ECO:0000318"/>
    <property type="project" value="GO_Central"/>
</dbReference>
<dbReference type="GO" id="GO:0005681">
    <property type="term" value="C:spliceosomal complex"/>
    <property type="evidence" value="ECO:0000266"/>
    <property type="project" value="RGD"/>
</dbReference>
<dbReference type="GO" id="GO:0045202">
    <property type="term" value="C:synapse"/>
    <property type="evidence" value="ECO:0000266"/>
    <property type="project" value="RGD"/>
</dbReference>
<dbReference type="GO" id="GO:0048306">
    <property type="term" value="F:calcium-dependent protein binding"/>
    <property type="evidence" value="ECO:0000314"/>
    <property type="project" value="RGD"/>
</dbReference>
<dbReference type="GO" id="GO:0003729">
    <property type="term" value="F:mRNA binding"/>
    <property type="evidence" value="ECO:0000318"/>
    <property type="project" value="GO_Central"/>
</dbReference>
<dbReference type="GO" id="GO:1990405">
    <property type="term" value="F:protein antigen binding"/>
    <property type="evidence" value="ECO:0000314"/>
    <property type="project" value="RGD"/>
</dbReference>
<dbReference type="GO" id="GO:0019904">
    <property type="term" value="F:protein domain specific binding"/>
    <property type="evidence" value="ECO:0000266"/>
    <property type="project" value="RGD"/>
</dbReference>
<dbReference type="GO" id="GO:0003723">
    <property type="term" value="F:RNA binding"/>
    <property type="evidence" value="ECO:0000304"/>
    <property type="project" value="RGD"/>
</dbReference>
<dbReference type="GO" id="GO:0000380">
    <property type="term" value="P:alternative mRNA splicing, via spliceosome"/>
    <property type="evidence" value="ECO:0000266"/>
    <property type="project" value="RGD"/>
</dbReference>
<dbReference type="GO" id="GO:1990831">
    <property type="term" value="P:cellular response to carcinoembryonic antigen"/>
    <property type="evidence" value="ECO:0000270"/>
    <property type="project" value="RGD"/>
</dbReference>
<dbReference type="GO" id="GO:0071222">
    <property type="term" value="P:cellular response to lipopolysaccharide"/>
    <property type="evidence" value="ECO:0000270"/>
    <property type="project" value="RGD"/>
</dbReference>
<dbReference type="GO" id="GO:1904591">
    <property type="term" value="P:positive regulation of protein import"/>
    <property type="evidence" value="ECO:0000314"/>
    <property type="project" value="RGD"/>
</dbReference>
<dbReference type="GO" id="GO:1900182">
    <property type="term" value="P:positive regulation of protein localization to nucleus"/>
    <property type="evidence" value="ECO:0000315"/>
    <property type="project" value="RGD"/>
</dbReference>
<dbReference type="GO" id="GO:0099175">
    <property type="term" value="P:regulation of postsynapse organization"/>
    <property type="evidence" value="ECO:0000314"/>
    <property type="project" value="SynGO"/>
</dbReference>
<dbReference type="CDD" id="cd12657">
    <property type="entry name" value="RRM1_hnRNPM"/>
    <property type="match status" value="1"/>
</dbReference>
<dbReference type="CDD" id="cd12659">
    <property type="entry name" value="RRM2_hnRNPM"/>
    <property type="match status" value="1"/>
</dbReference>
<dbReference type="CDD" id="cd12661">
    <property type="entry name" value="RRM3_hnRNPM"/>
    <property type="match status" value="1"/>
</dbReference>
<dbReference type="FunFam" id="3.30.70.330:FF:000033">
    <property type="entry name" value="heterogeneous nuclear ribonucleoprotein M isoform X1"/>
    <property type="match status" value="1"/>
</dbReference>
<dbReference type="FunFam" id="3.30.70.330:FF:000034">
    <property type="entry name" value="heterogeneous nuclear ribonucleoprotein M isoform X1"/>
    <property type="match status" value="1"/>
</dbReference>
<dbReference type="FunFam" id="3.30.70.330:FF:000548">
    <property type="entry name" value="Myelin expression factor 2"/>
    <property type="match status" value="1"/>
</dbReference>
<dbReference type="Gene3D" id="3.30.70.330">
    <property type="match status" value="3"/>
</dbReference>
<dbReference type="InterPro" id="IPR024666">
    <property type="entry name" value="HnRNP_M_PY-NLS"/>
</dbReference>
<dbReference type="InterPro" id="IPR034990">
    <property type="entry name" value="hnRNPM_RRM3"/>
</dbReference>
<dbReference type="InterPro" id="IPR012677">
    <property type="entry name" value="Nucleotide-bd_a/b_plait_sf"/>
</dbReference>
<dbReference type="InterPro" id="IPR035979">
    <property type="entry name" value="RBD_domain_sf"/>
</dbReference>
<dbReference type="InterPro" id="IPR000504">
    <property type="entry name" value="RRM_dom"/>
</dbReference>
<dbReference type="InterPro" id="IPR050374">
    <property type="entry name" value="RRT5_SRSF_SR"/>
</dbReference>
<dbReference type="PANTHER" id="PTHR23003">
    <property type="entry name" value="RNA RECOGNITION MOTIF RRM DOMAIN CONTAINING PROTEIN"/>
    <property type="match status" value="1"/>
</dbReference>
<dbReference type="Pfam" id="PF11532">
    <property type="entry name" value="HnRNP_M_NLS"/>
    <property type="match status" value="1"/>
</dbReference>
<dbReference type="Pfam" id="PF00076">
    <property type="entry name" value="RRM_1"/>
    <property type="match status" value="3"/>
</dbReference>
<dbReference type="SMART" id="SM00360">
    <property type="entry name" value="RRM"/>
    <property type="match status" value="3"/>
</dbReference>
<dbReference type="SUPFAM" id="SSF54928">
    <property type="entry name" value="RNA-binding domain, RBD"/>
    <property type="match status" value="2"/>
</dbReference>
<dbReference type="PROSITE" id="PS50102">
    <property type="entry name" value="RRM"/>
    <property type="match status" value="3"/>
</dbReference>
<sequence>MAAGVEAAAEVAATEPKMEEESGAPCVPSGNGAPVPKGEERPTQNEKRKEKNIKRGGNRFEPYANPTKRYRAFITNIPFDVKWQSLKDLVKEKVGEVTYVELLMDAEGKSRGCAVVEFKMEESMKKAAEVLNKHSLSGRPLKVKEDPDGEHARRAMQKAGRLGSTVFVANLDYKVGWKKLKEVFSMAGVVVRADILEDKDGKSRGIGTVTFEQSIEAVQAISMFNGQLLFDRPMHVKMDERALPKGDFFPPERPQQLPHGLGGIGMGLGPGGQPIDANHLNKGIGMGNLGPAGMGMEGIGFGINKIGGMEGPFGGGMENMGRFGSGMNMGRINEILSNALKRGEIIAKQGGSGAGGSVPGIERMGPGIDRISGAGMERMGAGLGHGMDRVGSEIERMGLVMDRMGSVERMGSGIERMGPLGLDHMASSIERMGQTMERIGSGVERMGAGMGFGLERMAAPIDRVGQTIERMGSGVERMGPAIERMGLSMDRMVPTGMGAGLERMGPVMDRMATGLERMGANNLERMGLERMGANSLERMGLERMGANSLERMGPAMGPALGAGIERMGLAMGGAGGASFDRTIEMERGNFGGSFAGSFGGAGGHAPGVARKACQIFVRNLPFDFTWKMLKDKFNECGHVLYADIKMENGKSKGCGVVKFESPEVAERACRMMNGMKLSGREIDVRIDRNA</sequence>
<reference evidence="10 11" key="1">
    <citation type="journal article" date="2001" name="J. Biol. Chem.">
        <title>Heterogeneous RNA-binding protein M4 is a receptor for carcinoembryonic antigen in Kupffer cells.</title>
        <authorList>
            <person name="Bajenova O.V."/>
            <person name="Zimmer R."/>
            <person name="Stolper E."/>
            <person name="Salisbury-Rowswell J."/>
            <person name="Nanji A."/>
            <person name="Thomas P."/>
        </authorList>
    </citation>
    <scope>NUCLEOTIDE SEQUENCE [MRNA] (ISOFORM 1)</scope>
    <scope>FUNCTION</scope>
    <scope>TISSUE SPECIFICITY</scope>
    <source>
        <tissue evidence="11">Liver</tissue>
    </source>
</reference>
<reference key="2">
    <citation type="journal article" date="2004" name="Genome Res.">
        <title>The status, quality, and expansion of the NIH full-length cDNA project: the Mammalian Gene Collection (MGC).</title>
        <authorList>
            <consortium name="The MGC Project Team"/>
        </authorList>
    </citation>
    <scope>NUCLEOTIDE SEQUENCE [LARGE SCALE MRNA] (ISOFORM 2)</scope>
    <source>
        <tissue>Liver</tissue>
    </source>
</reference>
<reference evidence="10" key="3">
    <citation type="journal article" date="2000" name="Biochem. J.">
        <title>The 72/74-kDa polypeptides of the 70-110 S large heterogeneous nuclear ribonucleoprotein complex (LH-nRNP) represent a discrete subset of the hnRNP M protein family.</title>
        <authorList>
            <person name="Kafasla P."/>
            <person name="Patrinou-Georgoula M."/>
            <person name="Guialis A."/>
        </authorList>
    </citation>
    <scope>PROTEIN SEQUENCE OF 55-68; 182-196; 245-260 AND 612-625</scope>
    <source>
        <tissue evidence="6">Liver</tissue>
    </source>
</reference>
<reference key="4">
    <citation type="journal article" date="2005" name="FEBS J.">
        <title>Proteome analysis of a rat liver nuclear insoluble protein fraction and localization of a novel protein, ISP36, to compartments in the interchromatin space.</title>
        <authorList>
            <person name="Segawa M."/>
            <person name="Niino K."/>
            <person name="Mineki R."/>
            <person name="Kaga N."/>
            <person name="Murayama K."/>
            <person name="Sugimoto K."/>
            <person name="Watanabe Y."/>
            <person name="Furukawa K."/>
            <person name="Horigome T."/>
        </authorList>
    </citation>
    <scope>PROTEIN SEQUENCE OF 60-68 AND 418-423</scope>
    <scope>SUBCELLULAR LOCATION</scope>
    <source>
        <tissue>Liver</tissue>
    </source>
</reference>
<reference key="5">
    <citation type="journal article" date="2012" name="Nat. Commun.">
        <title>Quantitative maps of protein phosphorylation sites across 14 different rat organs and tissues.</title>
        <authorList>
            <person name="Lundby A."/>
            <person name="Secher A."/>
            <person name="Lage K."/>
            <person name="Nordsborg N.B."/>
            <person name="Dmytriyev A."/>
            <person name="Lundby C."/>
            <person name="Olsen J.V."/>
        </authorList>
    </citation>
    <scope>PHOSPHORYLATION [LARGE SCALE ANALYSIS] AT SER-535; SER-548 AND SER-661</scope>
    <scope>IDENTIFICATION BY MASS SPECTROMETRY [LARGE SCALE ANALYSIS]</scope>
</reference>
<protein>
    <recommendedName>
        <fullName>Heterogeneous nuclear ribonucleoprotein M</fullName>
        <shortName>hnRNP M</shortName>
    </recommendedName>
    <alternativeName>
        <fullName>M4 protein</fullName>
    </alternativeName>
</protein>
<gene>
    <name type="primary">Hnrnpm</name>
    <name type="synonym">Hnrpm</name>
</gene>
<evidence type="ECO:0000250" key="1"/>
<evidence type="ECO:0000250" key="2">
    <source>
        <dbReference type="UniProtKB" id="P52272"/>
    </source>
</evidence>
<evidence type="ECO:0000250" key="3">
    <source>
        <dbReference type="UniProtKB" id="Q9D0E1"/>
    </source>
</evidence>
<evidence type="ECO:0000255" key="4">
    <source>
        <dbReference type="PROSITE-ProRule" id="PRU00176"/>
    </source>
</evidence>
<evidence type="ECO:0000256" key="5">
    <source>
        <dbReference type="SAM" id="MobiDB-lite"/>
    </source>
</evidence>
<evidence type="ECO:0000269" key="6">
    <source>
    </source>
</evidence>
<evidence type="ECO:0000269" key="7">
    <source>
    </source>
</evidence>
<evidence type="ECO:0000269" key="8">
    <source>
    </source>
</evidence>
<evidence type="ECO:0000303" key="9">
    <source>
    </source>
</evidence>
<evidence type="ECO:0000305" key="10"/>
<evidence type="ECO:0000312" key="11">
    <source>
        <dbReference type="EMBL" id="AAA83442.2"/>
    </source>
</evidence>
<evidence type="ECO:0007744" key="12">
    <source>
    </source>
</evidence>
<comment type="function">
    <text evidence="7">Pre-mRNA binding protein, binds avidly to poly(G) and poly(U) RNA homopolymers. Involved in splicing. Acts as a receptor for carcinoembryonic antigen in Kupffer cells, may initiate a series of signaling events leading to tyrosine phosphorylation of proteins and induction of IL-1 alpha, IL-6, IL-10 and tumor necrosis factor alpha cytokines.</text>
</comment>
<comment type="subunit">
    <text evidence="2">Identified in the spliceosome C complex (By similarity). Interacts with PPIA/CYPA (By similarity).</text>
</comment>
<comment type="subcellular location">
    <subcellularLocation>
        <location evidence="8">Nucleus matrix</location>
    </subcellularLocation>
</comment>
<comment type="alternative products">
    <event type="alternative splicing"/>
    <isoform>
        <id>Q62826-1</id>
        <name evidence="7">1</name>
        <sequence type="displayed"/>
    </isoform>
    <isoform>
        <id>Q62826-2</id>
        <name>2</name>
        <sequence type="described" ref="VSP_051766"/>
    </isoform>
</comment>
<comment type="tissue specificity">
    <text evidence="7">Expressed in all tissues tested, including liver, heart, lung, skeletal muscle, kidney, stomach, large intestine, small intestine, pancreas, spleen, peritoneal macrophage and thyroid.</text>
</comment>
<comment type="PTM">
    <text evidence="1">Sumoylated.</text>
</comment>
<comment type="sequence caution" evidence="10">
    <conflict type="erroneous initiation">
        <sequence resource="EMBL-CDS" id="AAA83442"/>
    </conflict>
</comment>
<proteinExistence type="evidence at protein level"/>
<name>HNRPM_RAT</name>